<evidence type="ECO:0000255" key="1">
    <source>
        <dbReference type="HAMAP-Rule" id="MF_00583"/>
    </source>
</evidence>
<evidence type="ECO:0000305" key="2"/>
<protein>
    <recommendedName>
        <fullName evidence="1">Ribose-phosphate pyrophosphokinase</fullName>
        <shortName evidence="1">RPPK</shortName>
        <ecNumber evidence="1">2.7.6.1</ecNumber>
    </recommendedName>
    <alternativeName>
        <fullName evidence="1">5-phospho-D-ribosyl alpha-1-diphosphate synthase</fullName>
    </alternativeName>
    <alternativeName>
        <fullName evidence="1">Phosphoribosyl diphosphate synthase</fullName>
    </alternativeName>
    <alternativeName>
        <fullName evidence="1">Phosphoribosyl pyrophosphate synthase</fullName>
        <shortName evidence="1">P-Rib-PP synthase</shortName>
        <shortName evidence="1">PRPP synthase</shortName>
        <shortName evidence="1">PRPPase</shortName>
    </alternativeName>
</protein>
<reference key="1">
    <citation type="journal article" date="1999" name="Science">
        <title>Genome sequence of the radioresistant bacterium Deinococcus radiodurans R1.</title>
        <authorList>
            <person name="White O."/>
            <person name="Eisen J.A."/>
            <person name="Heidelberg J.F."/>
            <person name="Hickey E.K."/>
            <person name="Peterson J.D."/>
            <person name="Dodson R.J."/>
            <person name="Haft D.H."/>
            <person name="Gwinn M.L."/>
            <person name="Nelson W.C."/>
            <person name="Richardson D.L."/>
            <person name="Moffat K.S."/>
            <person name="Qin H."/>
            <person name="Jiang L."/>
            <person name="Pamphile W."/>
            <person name="Crosby M."/>
            <person name="Shen M."/>
            <person name="Vamathevan J.J."/>
            <person name="Lam P."/>
            <person name="McDonald L.A."/>
            <person name="Utterback T.R."/>
            <person name="Zalewski C."/>
            <person name="Makarova K.S."/>
            <person name="Aravind L."/>
            <person name="Daly M.J."/>
            <person name="Minton K.W."/>
            <person name="Fleischmann R.D."/>
            <person name="Ketchum K.A."/>
            <person name="Nelson K.E."/>
            <person name="Salzberg S.L."/>
            <person name="Smith H.O."/>
            <person name="Venter J.C."/>
            <person name="Fraser C.M."/>
        </authorList>
    </citation>
    <scope>NUCLEOTIDE SEQUENCE [LARGE SCALE GENOMIC DNA]</scope>
    <source>
        <strain>ATCC 13939 / DSM 20539 / JCM 16871 / CCUG 27074 / LMG 4051 / NBRC 15346 / NCIMB 9279 / VKM B-1422 / R1</strain>
    </source>
</reference>
<name>KPRS_DEIRA</name>
<gene>
    <name evidence="1" type="primary">prs</name>
    <name type="ordered locus">DR_1456</name>
</gene>
<feature type="chain" id="PRO_0000141133" description="Ribose-phosphate pyrophosphokinase">
    <location>
        <begin position="1"/>
        <end position="320"/>
    </location>
</feature>
<feature type="active site" evidence="1">
    <location>
        <position position="198"/>
    </location>
</feature>
<feature type="binding site" evidence="1">
    <location>
        <begin position="41"/>
        <end position="43"/>
    </location>
    <ligand>
        <name>ATP</name>
        <dbReference type="ChEBI" id="CHEBI:30616"/>
    </ligand>
</feature>
<feature type="binding site" evidence="1">
    <location>
        <position position="134"/>
    </location>
    <ligand>
        <name>Mg(2+)</name>
        <dbReference type="ChEBI" id="CHEBI:18420"/>
        <label>1</label>
    </ligand>
</feature>
<feature type="binding site" evidence="1">
    <location>
        <position position="175"/>
    </location>
    <ligand>
        <name>Mg(2+)</name>
        <dbReference type="ChEBI" id="CHEBI:18420"/>
        <label>2</label>
    </ligand>
</feature>
<feature type="binding site" evidence="1">
    <location>
        <position position="200"/>
    </location>
    <ligand>
        <name>D-ribose 5-phosphate</name>
        <dbReference type="ChEBI" id="CHEBI:78346"/>
    </ligand>
</feature>
<feature type="binding site" evidence="1">
    <location>
        <position position="224"/>
    </location>
    <ligand>
        <name>D-ribose 5-phosphate</name>
        <dbReference type="ChEBI" id="CHEBI:78346"/>
    </ligand>
</feature>
<dbReference type="EC" id="2.7.6.1" evidence="1"/>
<dbReference type="EMBL" id="AE000513">
    <property type="protein sequence ID" value="AAF11025.1"/>
    <property type="status" value="ALT_INIT"/>
    <property type="molecule type" value="Genomic_DNA"/>
</dbReference>
<dbReference type="PIR" id="B75393">
    <property type="entry name" value="B75393"/>
</dbReference>
<dbReference type="RefSeq" id="NP_295179.1">
    <property type="nucleotide sequence ID" value="NC_001263.1"/>
</dbReference>
<dbReference type="RefSeq" id="WP_010888095.1">
    <property type="nucleotide sequence ID" value="NZ_CP150840.1"/>
</dbReference>
<dbReference type="RefSeq" id="WP_187767767.1">
    <property type="nucleotide sequence ID" value="NC_001263.1"/>
</dbReference>
<dbReference type="SMR" id="Q9RUD2"/>
<dbReference type="FunCoup" id="Q9RUD2">
    <property type="interactions" value="514"/>
</dbReference>
<dbReference type="STRING" id="243230.DR_1456"/>
<dbReference type="PaxDb" id="243230-DR_1456"/>
<dbReference type="EnsemblBacteria" id="AAF11025">
    <property type="protein sequence ID" value="AAF11025"/>
    <property type="gene ID" value="DR_1456"/>
</dbReference>
<dbReference type="GeneID" id="69517697"/>
<dbReference type="KEGG" id="dra:DR_1456"/>
<dbReference type="PATRIC" id="fig|243230.17.peg.1655"/>
<dbReference type="eggNOG" id="COG0462">
    <property type="taxonomic scope" value="Bacteria"/>
</dbReference>
<dbReference type="HOGENOM" id="CLU_033546_1_0_0"/>
<dbReference type="InParanoid" id="Q9RUD2"/>
<dbReference type="OrthoDB" id="9777067at2"/>
<dbReference type="UniPathway" id="UPA00087">
    <property type="reaction ID" value="UER00172"/>
</dbReference>
<dbReference type="Proteomes" id="UP000002524">
    <property type="component" value="Chromosome 1"/>
</dbReference>
<dbReference type="GO" id="GO:0005737">
    <property type="term" value="C:cytoplasm"/>
    <property type="evidence" value="ECO:0000318"/>
    <property type="project" value="GO_Central"/>
</dbReference>
<dbReference type="GO" id="GO:0002189">
    <property type="term" value="C:ribose phosphate diphosphokinase complex"/>
    <property type="evidence" value="ECO:0000318"/>
    <property type="project" value="GO_Central"/>
</dbReference>
<dbReference type="GO" id="GO:0005524">
    <property type="term" value="F:ATP binding"/>
    <property type="evidence" value="ECO:0007669"/>
    <property type="project" value="UniProtKB-KW"/>
</dbReference>
<dbReference type="GO" id="GO:0016301">
    <property type="term" value="F:kinase activity"/>
    <property type="evidence" value="ECO:0007669"/>
    <property type="project" value="UniProtKB-KW"/>
</dbReference>
<dbReference type="GO" id="GO:0000287">
    <property type="term" value="F:magnesium ion binding"/>
    <property type="evidence" value="ECO:0007669"/>
    <property type="project" value="UniProtKB-UniRule"/>
</dbReference>
<dbReference type="GO" id="GO:0004749">
    <property type="term" value="F:ribose phosphate diphosphokinase activity"/>
    <property type="evidence" value="ECO:0000318"/>
    <property type="project" value="GO_Central"/>
</dbReference>
<dbReference type="GO" id="GO:0006015">
    <property type="term" value="P:5-phosphoribose 1-diphosphate biosynthetic process"/>
    <property type="evidence" value="ECO:0000318"/>
    <property type="project" value="GO_Central"/>
</dbReference>
<dbReference type="GO" id="GO:0006164">
    <property type="term" value="P:purine nucleotide biosynthetic process"/>
    <property type="evidence" value="ECO:0000318"/>
    <property type="project" value="GO_Central"/>
</dbReference>
<dbReference type="CDD" id="cd06223">
    <property type="entry name" value="PRTases_typeI"/>
    <property type="match status" value="1"/>
</dbReference>
<dbReference type="FunFam" id="3.40.50.2020:FF:000111">
    <property type="entry name" value="Ribose-phosphate pyrophosphokinase"/>
    <property type="match status" value="1"/>
</dbReference>
<dbReference type="Gene3D" id="3.40.50.2020">
    <property type="match status" value="2"/>
</dbReference>
<dbReference type="HAMAP" id="MF_00583_B">
    <property type="entry name" value="RibP_PPkinase_B"/>
    <property type="match status" value="1"/>
</dbReference>
<dbReference type="InterPro" id="IPR029099">
    <property type="entry name" value="Pribosyltran_N"/>
</dbReference>
<dbReference type="InterPro" id="IPR000836">
    <property type="entry name" value="PRibTrfase_dom"/>
</dbReference>
<dbReference type="InterPro" id="IPR029057">
    <property type="entry name" value="PRTase-like"/>
</dbReference>
<dbReference type="InterPro" id="IPR005946">
    <property type="entry name" value="Rib-P_diPkinase"/>
</dbReference>
<dbReference type="InterPro" id="IPR037515">
    <property type="entry name" value="Rib-P_diPkinase_bac"/>
</dbReference>
<dbReference type="NCBIfam" id="NF002320">
    <property type="entry name" value="PRK01259.1"/>
    <property type="match status" value="1"/>
</dbReference>
<dbReference type="NCBIfam" id="TIGR01251">
    <property type="entry name" value="ribP_PPkin"/>
    <property type="match status" value="1"/>
</dbReference>
<dbReference type="PANTHER" id="PTHR10210">
    <property type="entry name" value="RIBOSE-PHOSPHATE DIPHOSPHOKINASE FAMILY MEMBER"/>
    <property type="match status" value="1"/>
</dbReference>
<dbReference type="PANTHER" id="PTHR10210:SF32">
    <property type="entry name" value="RIBOSE-PHOSPHATE PYROPHOSPHOKINASE 2"/>
    <property type="match status" value="1"/>
</dbReference>
<dbReference type="Pfam" id="PF14572">
    <property type="entry name" value="Pribosyl_synth"/>
    <property type="match status" value="1"/>
</dbReference>
<dbReference type="Pfam" id="PF13793">
    <property type="entry name" value="Pribosyltran_N"/>
    <property type="match status" value="1"/>
</dbReference>
<dbReference type="SMART" id="SM01400">
    <property type="entry name" value="Pribosyltran_N"/>
    <property type="match status" value="1"/>
</dbReference>
<dbReference type="SUPFAM" id="SSF53271">
    <property type="entry name" value="PRTase-like"/>
    <property type="match status" value="2"/>
</dbReference>
<keyword id="KW-0067">ATP-binding</keyword>
<keyword id="KW-0963">Cytoplasm</keyword>
<keyword id="KW-0418">Kinase</keyword>
<keyword id="KW-0460">Magnesium</keyword>
<keyword id="KW-0479">Metal-binding</keyword>
<keyword id="KW-0545">Nucleotide biosynthesis</keyword>
<keyword id="KW-0547">Nucleotide-binding</keyword>
<keyword id="KW-1185">Reference proteome</keyword>
<keyword id="KW-0808">Transferase</keyword>
<sequence>MNSRRSPLLVFSGQSNRPLAQAICDNLGVPLGRSRTEKFTNDNLIVHYEESLREGDVFIVQTFSTPVSDAIMELMLMIDAAKSASAGRVTAVIPYYSYARSDKKDSPRISIAGRLVADLLQEAGADRVLTMTLHSPQVHGFFKVPVDHLSADVVLSQHFKKCVPDAHNGVVLAPDAGSIKRASQIARRLDSGLAMIDKERLSDTEVRPRALIGDVDGKTVFIVDDEISTAGSLVETVSIARSMGAKDVYVAVTHGVYSGPAIERIAALDVTQVASCNTVLVPQDKLDRAGGKLAVLDVAPLFASAIANIHTGASVSTLFT</sequence>
<accession>Q9RUD2</accession>
<comment type="function">
    <text evidence="1">Involved in the biosynthesis of the central metabolite phospho-alpha-D-ribosyl-1-pyrophosphate (PRPP) via the transfer of pyrophosphoryl group from ATP to 1-hydroxyl of ribose-5-phosphate (Rib-5-P).</text>
</comment>
<comment type="catalytic activity">
    <reaction evidence="1">
        <text>D-ribose 5-phosphate + ATP = 5-phospho-alpha-D-ribose 1-diphosphate + AMP + H(+)</text>
        <dbReference type="Rhea" id="RHEA:15609"/>
        <dbReference type="ChEBI" id="CHEBI:15378"/>
        <dbReference type="ChEBI" id="CHEBI:30616"/>
        <dbReference type="ChEBI" id="CHEBI:58017"/>
        <dbReference type="ChEBI" id="CHEBI:78346"/>
        <dbReference type="ChEBI" id="CHEBI:456215"/>
        <dbReference type="EC" id="2.7.6.1"/>
    </reaction>
</comment>
<comment type="cofactor">
    <cofactor evidence="1">
        <name>Mg(2+)</name>
        <dbReference type="ChEBI" id="CHEBI:18420"/>
    </cofactor>
    <text evidence="1">Binds 2 Mg(2+) ions per subunit.</text>
</comment>
<comment type="pathway">
    <text evidence="1">Metabolic intermediate biosynthesis; 5-phospho-alpha-D-ribose 1-diphosphate biosynthesis; 5-phospho-alpha-D-ribose 1-diphosphate from D-ribose 5-phosphate (route I): step 1/1.</text>
</comment>
<comment type="subunit">
    <text evidence="1">Homohexamer.</text>
</comment>
<comment type="subcellular location">
    <subcellularLocation>
        <location evidence="1">Cytoplasm</location>
    </subcellularLocation>
</comment>
<comment type="similarity">
    <text evidence="1">Belongs to the ribose-phosphate pyrophosphokinase family. Class I subfamily.</text>
</comment>
<comment type="sequence caution" evidence="2">
    <conflict type="erroneous initiation">
        <sequence resource="EMBL-CDS" id="AAF11025"/>
    </conflict>
    <text>Extended N-terminus.</text>
</comment>
<proteinExistence type="inferred from homology"/>
<organism>
    <name type="scientific">Deinococcus radiodurans (strain ATCC 13939 / DSM 20539 / JCM 16871 / CCUG 27074 / LMG 4051 / NBRC 15346 / NCIMB 9279 / VKM B-1422 / R1)</name>
    <dbReference type="NCBI Taxonomy" id="243230"/>
    <lineage>
        <taxon>Bacteria</taxon>
        <taxon>Thermotogati</taxon>
        <taxon>Deinococcota</taxon>
        <taxon>Deinococci</taxon>
        <taxon>Deinococcales</taxon>
        <taxon>Deinococcaceae</taxon>
        <taxon>Deinococcus</taxon>
    </lineage>
</organism>